<organism>
    <name type="scientific">Aliarcobacter butzleri (strain RM4018)</name>
    <name type="common">Arcobacter butzleri</name>
    <dbReference type="NCBI Taxonomy" id="367737"/>
    <lineage>
        <taxon>Bacteria</taxon>
        <taxon>Pseudomonadati</taxon>
        <taxon>Campylobacterota</taxon>
        <taxon>Epsilonproteobacteria</taxon>
        <taxon>Campylobacterales</taxon>
        <taxon>Arcobacteraceae</taxon>
        <taxon>Aliarcobacter</taxon>
    </lineage>
</organism>
<sequence>MKADVIVGIQWGDEGKGKIVDMLAQKYDMVCRSQGGHNAGHTIWVDGVRYALQLIPSGILNPKAVNVIGNGVVVSPLNIIKEMSQFSSLEGRLFISDKAHLNLPFHALIDQAKERLKGDKAIGTTGKGIGPTYAEKVSRTGFRMGELLNPIKLCDDILEYFKQNRSIFDVLDISTPNKDELLAELNEYKEKLSPFITNTTNLVWKAIDENKRILLEGAQGTMLDIDHGTYPYVTSSSTVSAGSCTGLGINPKDIGVITGIVKAYCTRVGNGPFPTEDFTEAGKTIGEVGKEFGTVTGRKRRCGWFDAVAVRYASRLNGCDQLALMKLDVLDGFSKIKVCVAYELDGERIDYMPSDMQNVKPIYEEIDGWDSVVGIQDFDKLPVNAKKYIEKIEEITSVKVGIISTSPERADTIIRG</sequence>
<proteinExistence type="inferred from homology"/>
<comment type="function">
    <text evidence="1">Plays an important role in the de novo pathway of purine nucleotide biosynthesis. Catalyzes the first committed step in the biosynthesis of AMP from IMP.</text>
</comment>
<comment type="catalytic activity">
    <reaction evidence="1">
        <text>IMP + L-aspartate + GTP = N(6)-(1,2-dicarboxyethyl)-AMP + GDP + phosphate + 2 H(+)</text>
        <dbReference type="Rhea" id="RHEA:15753"/>
        <dbReference type="ChEBI" id="CHEBI:15378"/>
        <dbReference type="ChEBI" id="CHEBI:29991"/>
        <dbReference type="ChEBI" id="CHEBI:37565"/>
        <dbReference type="ChEBI" id="CHEBI:43474"/>
        <dbReference type="ChEBI" id="CHEBI:57567"/>
        <dbReference type="ChEBI" id="CHEBI:58053"/>
        <dbReference type="ChEBI" id="CHEBI:58189"/>
        <dbReference type="EC" id="6.3.4.4"/>
    </reaction>
</comment>
<comment type="cofactor">
    <cofactor evidence="1">
        <name>Mg(2+)</name>
        <dbReference type="ChEBI" id="CHEBI:18420"/>
    </cofactor>
    <text evidence="1">Binds 1 Mg(2+) ion per subunit.</text>
</comment>
<comment type="pathway">
    <text evidence="1">Purine metabolism; AMP biosynthesis via de novo pathway; AMP from IMP: step 1/2.</text>
</comment>
<comment type="subunit">
    <text evidence="1">Homodimer.</text>
</comment>
<comment type="subcellular location">
    <subcellularLocation>
        <location evidence="1">Cytoplasm</location>
    </subcellularLocation>
</comment>
<comment type="similarity">
    <text evidence="1">Belongs to the adenylosuccinate synthetase family.</text>
</comment>
<keyword id="KW-0963">Cytoplasm</keyword>
<keyword id="KW-0342">GTP-binding</keyword>
<keyword id="KW-0436">Ligase</keyword>
<keyword id="KW-0460">Magnesium</keyword>
<keyword id="KW-0479">Metal-binding</keyword>
<keyword id="KW-0547">Nucleotide-binding</keyword>
<keyword id="KW-0658">Purine biosynthesis</keyword>
<keyword id="KW-1185">Reference proteome</keyword>
<name>PURA_ALIB4</name>
<reference key="1">
    <citation type="journal article" date="2007" name="PLoS ONE">
        <title>The complete genome sequence and analysis of the Epsilonproteobacterium Arcobacter butzleri.</title>
        <authorList>
            <person name="Miller W.G."/>
            <person name="Parker C.T."/>
            <person name="Rubenfield M."/>
            <person name="Mendz G.L."/>
            <person name="Woesten M.M.S.M."/>
            <person name="Ussery D.W."/>
            <person name="Stolz J.F."/>
            <person name="Binnewies T.T."/>
            <person name="Hallin P.F."/>
            <person name="Wang G."/>
            <person name="Malek J.A."/>
            <person name="Rogosin A."/>
            <person name="Stanker L.H."/>
            <person name="Mandrell R.E."/>
        </authorList>
    </citation>
    <scope>NUCLEOTIDE SEQUENCE [LARGE SCALE GENOMIC DNA]</scope>
    <source>
        <strain>RM4018</strain>
    </source>
</reference>
<feature type="chain" id="PRO_0000321792" description="Adenylosuccinate synthetase">
    <location>
        <begin position="1"/>
        <end position="416"/>
    </location>
</feature>
<feature type="active site" description="Proton acceptor" evidence="1">
    <location>
        <position position="13"/>
    </location>
</feature>
<feature type="active site" description="Proton donor" evidence="1">
    <location>
        <position position="41"/>
    </location>
</feature>
<feature type="binding site" evidence="1">
    <location>
        <begin position="12"/>
        <end position="18"/>
    </location>
    <ligand>
        <name>GTP</name>
        <dbReference type="ChEBI" id="CHEBI:37565"/>
    </ligand>
</feature>
<feature type="binding site" description="in other chain" evidence="1">
    <location>
        <begin position="13"/>
        <end position="16"/>
    </location>
    <ligand>
        <name>IMP</name>
        <dbReference type="ChEBI" id="CHEBI:58053"/>
        <note>ligand shared between dimeric partners</note>
    </ligand>
</feature>
<feature type="binding site" evidence="1">
    <location>
        <position position="13"/>
    </location>
    <ligand>
        <name>Mg(2+)</name>
        <dbReference type="ChEBI" id="CHEBI:18420"/>
    </ligand>
</feature>
<feature type="binding site" description="in other chain" evidence="1">
    <location>
        <begin position="38"/>
        <end position="41"/>
    </location>
    <ligand>
        <name>IMP</name>
        <dbReference type="ChEBI" id="CHEBI:58053"/>
        <note>ligand shared between dimeric partners</note>
    </ligand>
</feature>
<feature type="binding site" evidence="1">
    <location>
        <begin position="40"/>
        <end position="42"/>
    </location>
    <ligand>
        <name>GTP</name>
        <dbReference type="ChEBI" id="CHEBI:37565"/>
    </ligand>
</feature>
<feature type="binding site" evidence="1">
    <location>
        <position position="40"/>
    </location>
    <ligand>
        <name>Mg(2+)</name>
        <dbReference type="ChEBI" id="CHEBI:18420"/>
    </ligand>
</feature>
<feature type="binding site" description="in other chain" evidence="1">
    <location>
        <position position="125"/>
    </location>
    <ligand>
        <name>IMP</name>
        <dbReference type="ChEBI" id="CHEBI:58053"/>
        <note>ligand shared between dimeric partners</note>
    </ligand>
</feature>
<feature type="binding site" evidence="1">
    <location>
        <position position="139"/>
    </location>
    <ligand>
        <name>IMP</name>
        <dbReference type="ChEBI" id="CHEBI:58053"/>
        <note>ligand shared between dimeric partners</note>
    </ligand>
</feature>
<feature type="binding site" description="in other chain" evidence="1">
    <location>
        <position position="219"/>
    </location>
    <ligand>
        <name>IMP</name>
        <dbReference type="ChEBI" id="CHEBI:58053"/>
        <note>ligand shared between dimeric partners</note>
    </ligand>
</feature>
<feature type="binding site" description="in other chain" evidence="1">
    <location>
        <position position="234"/>
    </location>
    <ligand>
        <name>IMP</name>
        <dbReference type="ChEBI" id="CHEBI:58053"/>
        <note>ligand shared between dimeric partners</note>
    </ligand>
</feature>
<feature type="binding site" evidence="1">
    <location>
        <begin position="294"/>
        <end position="300"/>
    </location>
    <ligand>
        <name>substrate</name>
    </ligand>
</feature>
<feature type="binding site" description="in other chain" evidence="1">
    <location>
        <position position="298"/>
    </location>
    <ligand>
        <name>IMP</name>
        <dbReference type="ChEBI" id="CHEBI:58053"/>
        <note>ligand shared between dimeric partners</note>
    </ligand>
</feature>
<feature type="binding site" evidence="1">
    <location>
        <position position="300"/>
    </location>
    <ligand>
        <name>GTP</name>
        <dbReference type="ChEBI" id="CHEBI:37565"/>
    </ligand>
</feature>
<feature type="binding site" evidence="1">
    <location>
        <begin position="326"/>
        <end position="328"/>
    </location>
    <ligand>
        <name>GTP</name>
        <dbReference type="ChEBI" id="CHEBI:37565"/>
    </ligand>
</feature>
<feature type="binding site" evidence="1">
    <location>
        <begin position="404"/>
        <end position="406"/>
    </location>
    <ligand>
        <name>GTP</name>
        <dbReference type="ChEBI" id="CHEBI:37565"/>
    </ligand>
</feature>
<accession>A8ER43</accession>
<dbReference type="EC" id="6.3.4.4" evidence="1"/>
<dbReference type="EMBL" id="CP000361">
    <property type="protein sequence ID" value="ABV66417.1"/>
    <property type="molecule type" value="Genomic_DNA"/>
</dbReference>
<dbReference type="RefSeq" id="WP_012012028.1">
    <property type="nucleotide sequence ID" value="NC_009850.1"/>
</dbReference>
<dbReference type="SMR" id="A8ER43"/>
<dbReference type="STRING" id="367737.Abu_0132"/>
<dbReference type="GeneID" id="24304499"/>
<dbReference type="KEGG" id="abu:Abu_0132"/>
<dbReference type="eggNOG" id="COG0104">
    <property type="taxonomic scope" value="Bacteria"/>
</dbReference>
<dbReference type="HOGENOM" id="CLU_029848_0_0_7"/>
<dbReference type="UniPathway" id="UPA00075">
    <property type="reaction ID" value="UER00335"/>
</dbReference>
<dbReference type="Proteomes" id="UP000001136">
    <property type="component" value="Chromosome"/>
</dbReference>
<dbReference type="GO" id="GO:0005737">
    <property type="term" value="C:cytoplasm"/>
    <property type="evidence" value="ECO:0007669"/>
    <property type="project" value="UniProtKB-SubCell"/>
</dbReference>
<dbReference type="GO" id="GO:0004019">
    <property type="term" value="F:adenylosuccinate synthase activity"/>
    <property type="evidence" value="ECO:0007669"/>
    <property type="project" value="UniProtKB-UniRule"/>
</dbReference>
<dbReference type="GO" id="GO:0005525">
    <property type="term" value="F:GTP binding"/>
    <property type="evidence" value="ECO:0007669"/>
    <property type="project" value="UniProtKB-UniRule"/>
</dbReference>
<dbReference type="GO" id="GO:0000287">
    <property type="term" value="F:magnesium ion binding"/>
    <property type="evidence" value="ECO:0007669"/>
    <property type="project" value="UniProtKB-UniRule"/>
</dbReference>
<dbReference type="GO" id="GO:0044208">
    <property type="term" value="P:'de novo' AMP biosynthetic process"/>
    <property type="evidence" value="ECO:0007669"/>
    <property type="project" value="UniProtKB-UniRule"/>
</dbReference>
<dbReference type="GO" id="GO:0046040">
    <property type="term" value="P:IMP metabolic process"/>
    <property type="evidence" value="ECO:0007669"/>
    <property type="project" value="TreeGrafter"/>
</dbReference>
<dbReference type="CDD" id="cd03108">
    <property type="entry name" value="AdSS"/>
    <property type="match status" value="1"/>
</dbReference>
<dbReference type="FunFam" id="1.10.300.10:FF:000001">
    <property type="entry name" value="Adenylosuccinate synthetase"/>
    <property type="match status" value="1"/>
</dbReference>
<dbReference type="FunFam" id="3.90.170.10:FF:000001">
    <property type="entry name" value="Adenylosuccinate synthetase"/>
    <property type="match status" value="1"/>
</dbReference>
<dbReference type="Gene3D" id="3.40.440.10">
    <property type="entry name" value="Adenylosuccinate Synthetase, subunit A, domain 1"/>
    <property type="match status" value="1"/>
</dbReference>
<dbReference type="Gene3D" id="1.10.300.10">
    <property type="entry name" value="Adenylosuccinate Synthetase, subunit A, domain 2"/>
    <property type="match status" value="1"/>
</dbReference>
<dbReference type="Gene3D" id="3.90.170.10">
    <property type="entry name" value="Adenylosuccinate Synthetase, subunit A, domain 3"/>
    <property type="match status" value="1"/>
</dbReference>
<dbReference type="HAMAP" id="MF_00011">
    <property type="entry name" value="Adenylosucc_synth"/>
    <property type="match status" value="1"/>
</dbReference>
<dbReference type="InterPro" id="IPR018220">
    <property type="entry name" value="Adenylosuccin_syn_GTP-bd"/>
</dbReference>
<dbReference type="InterPro" id="IPR033128">
    <property type="entry name" value="Adenylosuccin_syn_Lys_AS"/>
</dbReference>
<dbReference type="InterPro" id="IPR042109">
    <property type="entry name" value="Adenylosuccinate_synth_dom1"/>
</dbReference>
<dbReference type="InterPro" id="IPR042110">
    <property type="entry name" value="Adenylosuccinate_synth_dom2"/>
</dbReference>
<dbReference type="InterPro" id="IPR042111">
    <property type="entry name" value="Adenylosuccinate_synth_dom3"/>
</dbReference>
<dbReference type="InterPro" id="IPR001114">
    <property type="entry name" value="Adenylosuccinate_synthetase"/>
</dbReference>
<dbReference type="InterPro" id="IPR027417">
    <property type="entry name" value="P-loop_NTPase"/>
</dbReference>
<dbReference type="NCBIfam" id="NF002223">
    <property type="entry name" value="PRK01117.1"/>
    <property type="match status" value="1"/>
</dbReference>
<dbReference type="NCBIfam" id="TIGR00184">
    <property type="entry name" value="purA"/>
    <property type="match status" value="1"/>
</dbReference>
<dbReference type="PANTHER" id="PTHR11846">
    <property type="entry name" value="ADENYLOSUCCINATE SYNTHETASE"/>
    <property type="match status" value="1"/>
</dbReference>
<dbReference type="PANTHER" id="PTHR11846:SF0">
    <property type="entry name" value="ADENYLOSUCCINATE SYNTHETASE"/>
    <property type="match status" value="1"/>
</dbReference>
<dbReference type="Pfam" id="PF00709">
    <property type="entry name" value="Adenylsucc_synt"/>
    <property type="match status" value="1"/>
</dbReference>
<dbReference type="SMART" id="SM00788">
    <property type="entry name" value="Adenylsucc_synt"/>
    <property type="match status" value="1"/>
</dbReference>
<dbReference type="SUPFAM" id="SSF52540">
    <property type="entry name" value="P-loop containing nucleoside triphosphate hydrolases"/>
    <property type="match status" value="1"/>
</dbReference>
<dbReference type="PROSITE" id="PS01266">
    <property type="entry name" value="ADENYLOSUCCIN_SYN_1"/>
    <property type="match status" value="1"/>
</dbReference>
<dbReference type="PROSITE" id="PS00513">
    <property type="entry name" value="ADENYLOSUCCIN_SYN_2"/>
    <property type="match status" value="1"/>
</dbReference>
<gene>
    <name evidence="1" type="primary">purA</name>
    <name type="ordered locus">Abu_0132</name>
</gene>
<protein>
    <recommendedName>
        <fullName evidence="1">Adenylosuccinate synthetase</fullName>
        <shortName evidence="1">AMPSase</shortName>
        <shortName evidence="1">AdSS</shortName>
        <ecNumber evidence="1">6.3.4.4</ecNumber>
    </recommendedName>
    <alternativeName>
        <fullName evidence="1">IMP--aspartate ligase</fullName>
    </alternativeName>
</protein>
<evidence type="ECO:0000255" key="1">
    <source>
        <dbReference type="HAMAP-Rule" id="MF_00011"/>
    </source>
</evidence>